<dbReference type="EMBL" id="CP000503">
    <property type="protein sequence ID" value="ABM26516.1"/>
    <property type="molecule type" value="Genomic_DNA"/>
</dbReference>
<dbReference type="RefSeq" id="WP_011790947.1">
    <property type="nucleotide sequence ID" value="NC_008750.1"/>
</dbReference>
<dbReference type="SMR" id="A1RPC1"/>
<dbReference type="GeneID" id="67445253"/>
<dbReference type="KEGG" id="shw:Sputw3181_3707"/>
<dbReference type="HOGENOM" id="CLU_054493_0_0_6"/>
<dbReference type="Proteomes" id="UP000002597">
    <property type="component" value="Chromosome"/>
</dbReference>
<dbReference type="GO" id="GO:0005737">
    <property type="term" value="C:cytoplasm"/>
    <property type="evidence" value="ECO:0007669"/>
    <property type="project" value="UniProtKB-SubCell"/>
</dbReference>
<dbReference type="GO" id="GO:0044183">
    <property type="term" value="F:protein folding chaperone"/>
    <property type="evidence" value="ECO:0007669"/>
    <property type="project" value="TreeGrafter"/>
</dbReference>
<dbReference type="GO" id="GO:0051082">
    <property type="term" value="F:unfolded protein binding"/>
    <property type="evidence" value="ECO:0007669"/>
    <property type="project" value="UniProtKB-UniRule"/>
</dbReference>
<dbReference type="GO" id="GO:0042026">
    <property type="term" value="P:protein refolding"/>
    <property type="evidence" value="ECO:0007669"/>
    <property type="project" value="TreeGrafter"/>
</dbReference>
<dbReference type="CDD" id="cd00498">
    <property type="entry name" value="Hsp33"/>
    <property type="match status" value="1"/>
</dbReference>
<dbReference type="Gene3D" id="1.10.287.480">
    <property type="entry name" value="helix hairpin bin"/>
    <property type="match status" value="1"/>
</dbReference>
<dbReference type="Gene3D" id="3.55.30.10">
    <property type="entry name" value="Hsp33 domain"/>
    <property type="match status" value="1"/>
</dbReference>
<dbReference type="Gene3D" id="3.90.1280.10">
    <property type="entry name" value="HSP33 redox switch-like"/>
    <property type="match status" value="1"/>
</dbReference>
<dbReference type="HAMAP" id="MF_00117">
    <property type="entry name" value="HslO"/>
    <property type="match status" value="1"/>
</dbReference>
<dbReference type="InterPro" id="IPR000397">
    <property type="entry name" value="Heat_shock_Hsp33"/>
</dbReference>
<dbReference type="InterPro" id="IPR016154">
    <property type="entry name" value="Heat_shock_Hsp33_C"/>
</dbReference>
<dbReference type="InterPro" id="IPR016153">
    <property type="entry name" value="Heat_shock_Hsp33_N"/>
</dbReference>
<dbReference type="InterPro" id="IPR023212">
    <property type="entry name" value="Hsp33_helix_hairpin_bin_dom_sf"/>
</dbReference>
<dbReference type="NCBIfam" id="NF001033">
    <property type="entry name" value="PRK00114.1"/>
    <property type="match status" value="1"/>
</dbReference>
<dbReference type="PANTHER" id="PTHR30111">
    <property type="entry name" value="33 KDA CHAPERONIN"/>
    <property type="match status" value="1"/>
</dbReference>
<dbReference type="PANTHER" id="PTHR30111:SF1">
    <property type="entry name" value="33 KDA CHAPERONIN"/>
    <property type="match status" value="1"/>
</dbReference>
<dbReference type="Pfam" id="PF01430">
    <property type="entry name" value="HSP33"/>
    <property type="match status" value="1"/>
</dbReference>
<dbReference type="PIRSF" id="PIRSF005261">
    <property type="entry name" value="Heat_shock_Hsp33"/>
    <property type="match status" value="1"/>
</dbReference>
<dbReference type="SUPFAM" id="SSF64397">
    <property type="entry name" value="Hsp33 domain"/>
    <property type="match status" value="1"/>
</dbReference>
<dbReference type="SUPFAM" id="SSF118352">
    <property type="entry name" value="HSP33 redox switch-like"/>
    <property type="match status" value="1"/>
</dbReference>
<gene>
    <name evidence="1" type="primary">hslO</name>
    <name type="ordered locus">Sputw3181_3707</name>
</gene>
<organism>
    <name type="scientific">Shewanella sp. (strain W3-18-1)</name>
    <dbReference type="NCBI Taxonomy" id="351745"/>
    <lineage>
        <taxon>Bacteria</taxon>
        <taxon>Pseudomonadati</taxon>
        <taxon>Pseudomonadota</taxon>
        <taxon>Gammaproteobacteria</taxon>
        <taxon>Alteromonadales</taxon>
        <taxon>Shewanellaceae</taxon>
        <taxon>Shewanella</taxon>
    </lineage>
</organism>
<reference key="1">
    <citation type="submission" date="2006-12" db="EMBL/GenBank/DDBJ databases">
        <title>Complete sequence of Shewanella sp. W3-18-1.</title>
        <authorList>
            <consortium name="US DOE Joint Genome Institute"/>
            <person name="Copeland A."/>
            <person name="Lucas S."/>
            <person name="Lapidus A."/>
            <person name="Barry K."/>
            <person name="Detter J.C."/>
            <person name="Glavina del Rio T."/>
            <person name="Hammon N."/>
            <person name="Israni S."/>
            <person name="Dalin E."/>
            <person name="Tice H."/>
            <person name="Pitluck S."/>
            <person name="Chain P."/>
            <person name="Malfatti S."/>
            <person name="Shin M."/>
            <person name="Vergez L."/>
            <person name="Schmutz J."/>
            <person name="Larimer F."/>
            <person name="Land M."/>
            <person name="Hauser L."/>
            <person name="Kyrpides N."/>
            <person name="Lykidis A."/>
            <person name="Tiedje J."/>
            <person name="Richardson P."/>
        </authorList>
    </citation>
    <scope>NUCLEOTIDE SEQUENCE [LARGE SCALE GENOMIC DNA]</scope>
    <source>
        <strain>W3-18-1</strain>
    </source>
</reference>
<accession>A1RPC1</accession>
<feature type="chain" id="PRO_1000015572" description="33 kDa chaperonin">
    <location>
        <begin position="1"/>
        <end position="286"/>
    </location>
</feature>
<feature type="disulfide bond" description="Redox-active" evidence="1">
    <location>
        <begin position="225"/>
        <end position="227"/>
    </location>
</feature>
<feature type="disulfide bond" description="Redox-active" evidence="1">
    <location>
        <begin position="258"/>
        <end position="261"/>
    </location>
</feature>
<name>HSLO_SHESW</name>
<comment type="function">
    <text evidence="1">Redox regulated molecular chaperone. Protects both thermally unfolding and oxidatively damaged proteins from irreversible aggregation. Plays an important role in the bacterial defense system toward oxidative stress.</text>
</comment>
<comment type="subcellular location">
    <subcellularLocation>
        <location evidence="1">Cytoplasm</location>
    </subcellularLocation>
</comment>
<comment type="PTM">
    <text evidence="1">Under oxidizing conditions two disulfide bonds are formed involving the reactive cysteines. Under reducing conditions zinc is bound to the reactive cysteines and the protein is inactive.</text>
</comment>
<comment type="similarity">
    <text evidence="1">Belongs to the HSP33 family.</text>
</comment>
<evidence type="ECO:0000255" key="1">
    <source>
        <dbReference type="HAMAP-Rule" id="MF_00117"/>
    </source>
</evidence>
<keyword id="KW-0143">Chaperone</keyword>
<keyword id="KW-0963">Cytoplasm</keyword>
<keyword id="KW-1015">Disulfide bond</keyword>
<keyword id="KW-0676">Redox-active center</keyword>
<keyword id="KW-0862">Zinc</keyword>
<proteinExistence type="inferred from homology"/>
<sequence length="286" mass="31790">MNQDILHRYLFDNADVRGELVQLQESYQQVLDAQAYPPVLQILLGELMAATSLLTATLKFSGDISVQLQGNGPVSLAVINGNNLQQLRGVARWNGELTDNASLADLFGQGYMVITLTPDEGERYQGVVALDKPTLAACVEEYFNQSEQLPTALWLFANGQQAAGMFLQILPSQEDHHQDFEHLSQLTSTIKAEELFTLDAENVLHRLYHQEEVRLFDPIEVSFKCTCSRERSAAAIKTLEQAEVEAILAEEGKIEMGCEYCNANYVFDGIDITTIFANGQNSNIPQ</sequence>
<protein>
    <recommendedName>
        <fullName evidence="1">33 kDa chaperonin</fullName>
    </recommendedName>
    <alternativeName>
        <fullName evidence="1">Heat shock protein 33 homolog</fullName>
        <shortName evidence="1">HSP33</shortName>
    </alternativeName>
</protein>